<proteinExistence type="inferred from homology"/>
<comment type="function">
    <text evidence="1">Binds to actin and affects the structure of the cytoskeleton. At high concentrations inhibits spontaneous rabbit actin nucleation. This strongly suggests this archaea has a profilin-regulated actin system, and actin-type genes can be identified in this organism.</text>
</comment>
<comment type="subcellular location">
    <subcellularLocation>
        <location evidence="4">Cytoplasm</location>
        <location evidence="4">Cytoskeleton</location>
    </subcellularLocation>
</comment>
<comment type="miscellaneous">
    <text evidence="3">It is not clear if Loki profilins 1, 2 and 3 are from the same strain.</text>
</comment>
<comment type="similarity">
    <text evidence="3">Belongs to the Asgard profilin family.</text>
</comment>
<dbReference type="EMBL" id="JYIM01000011">
    <property type="protein sequence ID" value="KKK46418.1"/>
    <property type="molecule type" value="Genomic_DNA"/>
</dbReference>
<dbReference type="SMR" id="A0A0F8VPX6"/>
<dbReference type="KEGG" id="loki:Lokiarch_01510"/>
<dbReference type="Proteomes" id="UP000034722">
    <property type="component" value="Unassembled WGS sequence"/>
</dbReference>
<dbReference type="GO" id="GO:0005737">
    <property type="term" value="C:cytoplasm"/>
    <property type="evidence" value="ECO:0007669"/>
    <property type="project" value="UniProtKB-KW"/>
</dbReference>
<dbReference type="GO" id="GO:0005856">
    <property type="term" value="C:cytoskeleton"/>
    <property type="evidence" value="ECO:0007669"/>
    <property type="project" value="UniProtKB-SubCell"/>
</dbReference>
<dbReference type="GO" id="GO:0003779">
    <property type="term" value="F:actin binding"/>
    <property type="evidence" value="ECO:0007669"/>
    <property type="project" value="UniProtKB-KW"/>
</dbReference>
<dbReference type="Gene3D" id="3.30.450.30">
    <property type="entry name" value="Dynein light chain 2a, cytoplasmic"/>
    <property type="match status" value="1"/>
</dbReference>
<dbReference type="InterPro" id="IPR036140">
    <property type="entry name" value="PFN_sf"/>
</dbReference>
<dbReference type="SUPFAM" id="SSF55770">
    <property type="entry name" value="Profilin (actin-binding protein)"/>
    <property type="match status" value="1"/>
</dbReference>
<reference key="1">
    <citation type="journal article" date="2015" name="Nature">
        <title>Complex archaea that bridge the gap between prokaryotes and eukaryotes.</title>
        <authorList>
            <person name="Spang A."/>
            <person name="Saw J.H."/>
            <person name="Jorgensen S.L."/>
            <person name="Zaremba-Niedzwiedzka K."/>
            <person name="Martijn J."/>
            <person name="Lind A.E."/>
            <person name="van Eijk R."/>
            <person name="Schleper C."/>
            <person name="Guy L."/>
            <person name="Ettema T.J."/>
        </authorList>
    </citation>
    <scope>NUCLEOTIDE SEQUENCE [LARGE SCALE GENOMIC DNA]</scope>
    <source>
        <strain>GC14_75</strain>
    </source>
</reference>
<reference key="2">
    <citation type="journal article" date="2018" name="Nature">
        <title>Genomes of Asgard archaea encode profilins that regulate actin.</title>
        <authorList>
            <person name="Akil C."/>
            <person name="Robinson R.C."/>
        </authorList>
    </citation>
    <scope>FUNCTION</scope>
    <scope>SUBCELLULAR LOCATION</scope>
</reference>
<feature type="chain" id="PRO_0000450551" description="Loki profilin-3">
    <location>
        <begin position="1"/>
        <end position="123"/>
    </location>
</feature>
<keyword id="KW-0009">Actin-binding</keyword>
<keyword id="KW-0963">Cytoplasm</keyword>
<keyword id="KW-0206">Cytoskeleton</keyword>
<gene>
    <name type="ORF">Lokiarch_01510</name>
</gene>
<organism>
    <name type="scientific">Lokiarchaeum sp. (strain GC14_75)</name>
    <dbReference type="NCBI Taxonomy" id="1538547"/>
    <lineage>
        <taxon>Archaea</taxon>
        <taxon>Promethearchaeati</taxon>
        <taxon>Promethearchaeota</taxon>
        <taxon>Promethearchaeia</taxon>
        <taxon>Promethearchaeales</taxon>
        <taxon>Promethearchaeaceae</taxon>
        <taxon>Candidatus Lokiarchaeum</taxon>
    </lineage>
</organism>
<protein>
    <recommendedName>
        <fullName evidence="2">Loki profilin-3</fullName>
    </recommendedName>
</protein>
<sequence>MEEQKFHSLVKALNEHEGIEEVFLLNKDGSIIYKSGEFSLTDDEAKSILSAWKEKEPSLSFQNFRFAILKNDDLQLAAKNIGKGKGNIVGSITREGDYLIAHTRDEALILLEWSIFINKVAWS</sequence>
<evidence type="ECO:0000269" key="1">
    <source>
    </source>
</evidence>
<evidence type="ECO:0000303" key="2">
    <source>
    </source>
</evidence>
<evidence type="ECO:0000305" key="3"/>
<evidence type="ECO:0000305" key="4">
    <source>
    </source>
</evidence>
<accession>A0A0F8VPX6</accession>
<name>PROF3_LOKSG</name>